<keyword id="KW-0223">Dioxygenase</keyword>
<keyword id="KW-0408">Iron</keyword>
<keyword id="KW-0479">Metal-binding</keyword>
<keyword id="KW-0560">Oxidoreductase</keyword>
<keyword id="KW-0611">Plant defense</keyword>
<keyword id="KW-1185">Reference proteome</keyword>
<organism>
    <name type="scientific">Oryza sativa subsp. japonica</name>
    <name type="common">Rice</name>
    <dbReference type="NCBI Taxonomy" id="39947"/>
    <lineage>
        <taxon>Eukaryota</taxon>
        <taxon>Viridiplantae</taxon>
        <taxon>Streptophyta</taxon>
        <taxon>Embryophyta</taxon>
        <taxon>Tracheophyta</taxon>
        <taxon>Spermatophyta</taxon>
        <taxon>Magnoliopsida</taxon>
        <taxon>Liliopsida</taxon>
        <taxon>Poales</taxon>
        <taxon>Poaceae</taxon>
        <taxon>BOP clade</taxon>
        <taxon>Oryzoideae</taxon>
        <taxon>Oryzeae</taxon>
        <taxon>Oryzinae</taxon>
        <taxon>Oryza</taxon>
        <taxon>Oryza sativa</taxon>
    </lineage>
</organism>
<reference key="1">
    <citation type="journal article" date="2005" name="Nature">
        <title>The map-based sequence of the rice genome.</title>
        <authorList>
            <consortium name="International rice genome sequencing project (IRGSP)"/>
        </authorList>
    </citation>
    <scope>NUCLEOTIDE SEQUENCE [LARGE SCALE GENOMIC DNA]</scope>
    <source>
        <strain>cv. Nipponbare</strain>
    </source>
</reference>
<reference key="2">
    <citation type="journal article" date="2008" name="Nucleic Acids Res.">
        <title>The rice annotation project database (RAP-DB): 2008 update.</title>
        <authorList>
            <consortium name="The rice annotation project (RAP)"/>
        </authorList>
    </citation>
    <scope>GENOME REANNOTATION</scope>
    <source>
        <strain>cv. Nipponbare</strain>
    </source>
</reference>
<reference key="3">
    <citation type="journal article" date="2013" name="Rice">
        <title>Improvement of the Oryza sativa Nipponbare reference genome using next generation sequence and optical map data.</title>
        <authorList>
            <person name="Kawahara Y."/>
            <person name="de la Bastide M."/>
            <person name="Hamilton J.P."/>
            <person name="Kanamori H."/>
            <person name="McCombie W.R."/>
            <person name="Ouyang S."/>
            <person name="Schwartz D.C."/>
            <person name="Tanaka T."/>
            <person name="Wu J."/>
            <person name="Zhou S."/>
            <person name="Childs K.L."/>
            <person name="Davidson R.M."/>
            <person name="Lin H."/>
            <person name="Quesada-Ocampo L."/>
            <person name="Vaillancourt B."/>
            <person name="Sakai H."/>
            <person name="Lee S.S."/>
            <person name="Kim J."/>
            <person name="Numa H."/>
            <person name="Itoh T."/>
            <person name="Buell C.R."/>
            <person name="Matsumoto T."/>
        </authorList>
    </citation>
    <scope>GENOME REANNOTATION</scope>
    <source>
        <strain>cv. Nipponbare</strain>
    </source>
</reference>
<reference key="4">
    <citation type="journal article" date="2013" name="Mol. Plant Microbe Interact.">
        <title>Gibberellin 20-oxidase gene OsGA20ox3 regulates plant stature and disease development in rice.</title>
        <authorList>
            <person name="Qin X."/>
            <person name="Liu J.H."/>
            <person name="Zhao W.S."/>
            <person name="Chen X.J."/>
            <person name="Guo Z.J."/>
            <person name="Peng Y.L."/>
        </authorList>
    </citation>
    <scope>FUNCTION</scope>
    <scope>TISSUE SPECIFICITY</scope>
</reference>
<proteinExistence type="evidence at transcript level"/>
<gene>
    <name evidence="5" type="primary">GA20OX3</name>
    <name evidence="8" type="ordered locus">Os07g0169700</name>
    <name evidence="6" type="ordered locus">LOC_Os07g07420</name>
    <name evidence="7" type="ORF">OSJNBa0050F10.19</name>
</gene>
<protein>
    <recommendedName>
        <fullName evidence="6">Gibberellin 20 oxidase 3</fullName>
        <shortName evidence="5">OsGA20ox3</shortName>
        <ecNumber evidence="2">1.14.11.-</ecNumber>
    </recommendedName>
    <alternativeName>
        <fullName evidence="6">GA 20-oxidase 3</fullName>
    </alternativeName>
    <alternativeName>
        <fullName evidence="6">Gibberellin C-20 oxidase 3</fullName>
    </alternativeName>
</protein>
<comment type="function">
    <text evidence="4">Key oxidase enzyme in the biosynthesis of gibberellin. Catalyzes the formation of bioactive gibberellins (GAs) via a three-step oxidation at C-20 of the GA skeleton. Controls the elongation of the vegetative shoot and plant height by the regulation of active gibberellin levels.</text>
</comment>
<comment type="catalytic activity">
    <reaction evidence="2">
        <text>gibberellin A12 + 2 2-oxoglutarate + 3 O2 + H(+) = gibberellin A9 + 2 succinate + 3 CO2 + 2 H2O</text>
        <dbReference type="Rhea" id="RHEA:60772"/>
        <dbReference type="ChEBI" id="CHEBI:15377"/>
        <dbReference type="ChEBI" id="CHEBI:15378"/>
        <dbReference type="ChEBI" id="CHEBI:15379"/>
        <dbReference type="ChEBI" id="CHEBI:16526"/>
        <dbReference type="ChEBI" id="CHEBI:16810"/>
        <dbReference type="ChEBI" id="CHEBI:30031"/>
        <dbReference type="ChEBI" id="CHEBI:58627"/>
        <dbReference type="ChEBI" id="CHEBI:73255"/>
    </reaction>
    <physiologicalReaction direction="left-to-right" evidence="2">
        <dbReference type="Rhea" id="RHEA:60773"/>
    </physiologicalReaction>
</comment>
<comment type="catalytic activity">
    <reaction evidence="2">
        <text>gibberellin A53 + 2 2-oxoglutarate + 3 O2 + H(+) = gibberellin A20 + 2 succinate + 3 CO2 + 2 H2O</text>
        <dbReference type="Rhea" id="RHEA:60796"/>
        <dbReference type="ChEBI" id="CHEBI:15377"/>
        <dbReference type="ChEBI" id="CHEBI:15378"/>
        <dbReference type="ChEBI" id="CHEBI:15379"/>
        <dbReference type="ChEBI" id="CHEBI:16526"/>
        <dbReference type="ChEBI" id="CHEBI:16810"/>
        <dbReference type="ChEBI" id="CHEBI:30031"/>
        <dbReference type="ChEBI" id="CHEBI:58526"/>
        <dbReference type="ChEBI" id="CHEBI:143954"/>
    </reaction>
    <physiologicalReaction direction="left-to-right" evidence="2">
        <dbReference type="Rhea" id="RHEA:60797"/>
    </physiologicalReaction>
</comment>
<comment type="cofactor">
    <cofactor evidence="3">
        <name>Fe(2+)</name>
        <dbReference type="ChEBI" id="CHEBI:29033"/>
    </cofactor>
    <text evidence="3">Binds 1 Fe(2+) ion per subunit.</text>
</comment>
<comment type="cofactor">
    <cofactor evidence="6">
        <name>L-ascorbate</name>
        <dbReference type="ChEBI" id="CHEBI:38290"/>
    </cofactor>
</comment>
<comment type="miscellaneous">
    <text evidence="4">Plants silencing GA20OX3 exhibit a semi-dwarf phenotype, and show enhanced resistance against the fungal pathogen Magnaporthe oryzae and the bacterial pathogen Xanthomonas oryzae pv. oryzae, and increased expression of defense-related genes. Plants over-expressing GA20OX3 exhibit a elongated shoot and internode phenotype, and show enhanced susceptibility against the fungal pathogen Magnaporthe oryzae and the bacterial pathogen Xanthomonas oryzae pv. oryzae, and accumulation of the bioactive gibberellins GA1 and GA4.</text>
</comment>
<comment type="similarity">
    <text evidence="6">Belongs to the iron/ascorbate-dependent oxidoreductase family.</text>
</comment>
<evidence type="ECO:0000250" key="1">
    <source>
        <dbReference type="UniProtKB" id="D4N500"/>
    </source>
</evidence>
<evidence type="ECO:0000250" key="2">
    <source>
        <dbReference type="UniProtKB" id="O04705"/>
    </source>
</evidence>
<evidence type="ECO:0000255" key="3">
    <source>
        <dbReference type="PROSITE-ProRule" id="PRU00805"/>
    </source>
</evidence>
<evidence type="ECO:0000269" key="4">
    <source>
    </source>
</evidence>
<evidence type="ECO:0000303" key="5">
    <source>
    </source>
</evidence>
<evidence type="ECO:0000305" key="6"/>
<evidence type="ECO:0000312" key="7">
    <source>
        <dbReference type="EMBL" id="BAD31785.1"/>
    </source>
</evidence>
<evidence type="ECO:0000312" key="8">
    <source>
        <dbReference type="EMBL" id="BAF20901.1"/>
    </source>
</evidence>
<dbReference type="EC" id="1.14.11.-" evidence="2"/>
<dbReference type="EMBL" id="AP005840">
    <property type="protein sequence ID" value="BAD31785.1"/>
    <property type="molecule type" value="Genomic_DNA"/>
</dbReference>
<dbReference type="EMBL" id="AP008213">
    <property type="protein sequence ID" value="BAF20901.1"/>
    <property type="molecule type" value="Genomic_DNA"/>
</dbReference>
<dbReference type="EMBL" id="AP014963">
    <property type="protein sequence ID" value="BAT00232.1"/>
    <property type="molecule type" value="Genomic_DNA"/>
</dbReference>
<dbReference type="RefSeq" id="NP_001408925.1">
    <property type="nucleotide sequence ID" value="NM_001421996.1"/>
</dbReference>
<dbReference type="SMR" id="Q69LD8"/>
<dbReference type="STRING" id="39947.Q69LD8"/>
<dbReference type="PaxDb" id="39947-Q69LD8"/>
<dbReference type="EnsemblPlants" id="Os07t0169700-01">
    <property type="protein sequence ID" value="Os07t0169700-01"/>
    <property type="gene ID" value="Os07g0169700"/>
</dbReference>
<dbReference type="GeneID" id="4342505"/>
<dbReference type="Gramene" id="Os07t0169700-01">
    <property type="protein sequence ID" value="Os07t0169700-01"/>
    <property type="gene ID" value="Os07g0169700"/>
</dbReference>
<dbReference type="KEGG" id="dosa:Os07g0169700"/>
<dbReference type="eggNOG" id="KOG0143">
    <property type="taxonomic scope" value="Eukaryota"/>
</dbReference>
<dbReference type="HOGENOM" id="CLU_010119_16_3_1"/>
<dbReference type="InParanoid" id="Q69LD8"/>
<dbReference type="OMA" id="QFVWPAE"/>
<dbReference type="Proteomes" id="UP000000763">
    <property type="component" value="Chromosome 7"/>
</dbReference>
<dbReference type="Proteomes" id="UP000059680">
    <property type="component" value="Chromosome 7"/>
</dbReference>
<dbReference type="GO" id="GO:0016706">
    <property type="term" value="F:2-oxoglutarate-dependent dioxygenase activity"/>
    <property type="evidence" value="ECO:0000314"/>
    <property type="project" value="UniProtKB"/>
</dbReference>
<dbReference type="GO" id="GO:0045544">
    <property type="term" value="F:gibberellin 20-oxidase activity"/>
    <property type="evidence" value="ECO:0000318"/>
    <property type="project" value="GO_Central"/>
</dbReference>
<dbReference type="GO" id="GO:0046872">
    <property type="term" value="F:metal ion binding"/>
    <property type="evidence" value="ECO:0007669"/>
    <property type="project" value="UniProtKB-KW"/>
</dbReference>
<dbReference type="GO" id="GO:0006952">
    <property type="term" value="P:defense response"/>
    <property type="evidence" value="ECO:0007669"/>
    <property type="project" value="UniProtKB-KW"/>
</dbReference>
<dbReference type="GO" id="GO:0009908">
    <property type="term" value="P:flower development"/>
    <property type="evidence" value="ECO:0000318"/>
    <property type="project" value="GO_Central"/>
</dbReference>
<dbReference type="GO" id="GO:0009686">
    <property type="term" value="P:gibberellin biosynthetic process"/>
    <property type="evidence" value="ECO:0000314"/>
    <property type="project" value="UniProtKB"/>
</dbReference>
<dbReference type="GO" id="GO:0009685">
    <property type="term" value="P:gibberellin metabolic process"/>
    <property type="evidence" value="ECO:0000305"/>
    <property type="project" value="Gramene"/>
</dbReference>
<dbReference type="GO" id="GO:0040008">
    <property type="term" value="P:regulation of growth"/>
    <property type="evidence" value="ECO:0000315"/>
    <property type="project" value="UniProtKB"/>
</dbReference>
<dbReference type="GO" id="GO:0009416">
    <property type="term" value="P:response to light stimulus"/>
    <property type="evidence" value="ECO:0000318"/>
    <property type="project" value="GO_Central"/>
</dbReference>
<dbReference type="GO" id="GO:0009826">
    <property type="term" value="P:unidimensional cell growth"/>
    <property type="evidence" value="ECO:0000318"/>
    <property type="project" value="GO_Central"/>
</dbReference>
<dbReference type="FunFam" id="2.60.120.330:FF:000003">
    <property type="entry name" value="Gibberellin 20 oxidase 2"/>
    <property type="match status" value="1"/>
</dbReference>
<dbReference type="Gene3D" id="2.60.120.330">
    <property type="entry name" value="B-lactam Antibiotic, Isopenicillin N Synthase, Chain"/>
    <property type="match status" value="1"/>
</dbReference>
<dbReference type="InterPro" id="IPR026992">
    <property type="entry name" value="DIOX_N"/>
</dbReference>
<dbReference type="InterPro" id="IPR044861">
    <property type="entry name" value="IPNS-like_FE2OG_OXY"/>
</dbReference>
<dbReference type="InterPro" id="IPR027443">
    <property type="entry name" value="IPNS-like_sf"/>
</dbReference>
<dbReference type="InterPro" id="IPR050231">
    <property type="entry name" value="Iron_ascorbate_oxido_reductase"/>
</dbReference>
<dbReference type="InterPro" id="IPR005123">
    <property type="entry name" value="Oxoglu/Fe-dep_dioxygenase_dom"/>
</dbReference>
<dbReference type="PANTHER" id="PTHR47990">
    <property type="entry name" value="2-OXOGLUTARATE (2OG) AND FE(II)-DEPENDENT OXYGENASE SUPERFAMILY PROTEIN-RELATED"/>
    <property type="match status" value="1"/>
</dbReference>
<dbReference type="Pfam" id="PF03171">
    <property type="entry name" value="2OG-FeII_Oxy"/>
    <property type="match status" value="1"/>
</dbReference>
<dbReference type="Pfam" id="PF14226">
    <property type="entry name" value="DIOX_N"/>
    <property type="match status" value="1"/>
</dbReference>
<dbReference type="PRINTS" id="PR00682">
    <property type="entry name" value="IPNSYNTHASE"/>
</dbReference>
<dbReference type="SUPFAM" id="SSF51197">
    <property type="entry name" value="Clavaminate synthase-like"/>
    <property type="match status" value="1"/>
</dbReference>
<dbReference type="PROSITE" id="PS51471">
    <property type="entry name" value="FE2OG_OXY"/>
    <property type="match status" value="1"/>
</dbReference>
<name>GAOX3_ORYSJ</name>
<feature type="chain" id="PRO_0000445032" description="Gibberellin 20 oxidase 3">
    <location>
        <begin position="1"/>
        <end position="367"/>
    </location>
</feature>
<feature type="domain" description="Fe2OG dioxygenase" evidence="3">
    <location>
        <begin position="198"/>
        <end position="304"/>
    </location>
</feature>
<feature type="binding site" evidence="1">
    <location>
        <position position="208"/>
    </location>
    <ligand>
        <name>2-oxoglutarate</name>
        <dbReference type="ChEBI" id="CHEBI:16810"/>
    </ligand>
</feature>
<feature type="binding site" evidence="3">
    <location>
        <position position="223"/>
    </location>
    <ligand>
        <name>Fe cation</name>
        <dbReference type="ChEBI" id="CHEBI:24875"/>
    </ligand>
</feature>
<feature type="binding site" evidence="3">
    <location>
        <position position="225"/>
    </location>
    <ligand>
        <name>Fe cation</name>
        <dbReference type="ChEBI" id="CHEBI:24875"/>
    </ligand>
</feature>
<feature type="binding site" evidence="3">
    <location>
        <position position="285"/>
    </location>
    <ligand>
        <name>Fe cation</name>
        <dbReference type="ChEBI" id="CHEBI:24875"/>
    </ligand>
</feature>
<feature type="binding site" evidence="3">
    <location>
        <position position="295"/>
    </location>
    <ligand>
        <name>2-oxoglutarate</name>
        <dbReference type="ChEBI" id="CHEBI:16810"/>
    </ligand>
</feature>
<feature type="binding site" evidence="1">
    <location>
        <position position="297"/>
    </location>
    <ligand>
        <name>2-oxoglutarate</name>
        <dbReference type="ChEBI" id="CHEBI:16810"/>
    </ligand>
</feature>
<sequence>MAAVVFDAAILSKQEAIPAQFVWPADEAPAADDGVVEEIAIPVVDLAAFLASGGIGRDVAEACERHGFFQVVNHGVDPALLAEAYRCCDAFYARPLAEKQRARRRPGENHGYASSFTGRFDCKLPWKETMSFNCSAAPGNARMVADYFVDALGEEYRHMGEVYQEYCDVMTRLALDVTEVLAVALGLGRGELRGFFADGDPVMRLNHYPPCRQPHLTLGTGPHRDPTSLTLLHQDDVGGLQVLPDDAAAAAGGWRAVRPRADAFVVNIGDTFAALTNGRHASCLHRAVVNGRVARRSLTFFLNPRLDRVVSPPPALVDAAHPRAFPDFTWREFLEFTQRHYRSDTNTMDAFVAWIKQRNGYESLDKY</sequence>
<accession>Q69LD8</accession>